<feature type="signal peptide">
    <location>
        <begin position="1"/>
        <end position="30"/>
    </location>
</feature>
<feature type="chain" id="PRO_0000007853" description="Endoglucanase G">
    <location>
        <begin position="31"/>
        <end position="566"/>
    </location>
</feature>
<feature type="domain" description="Dockerin" evidence="2">
    <location>
        <begin position="497"/>
        <end position="564"/>
    </location>
</feature>
<feature type="region of interest" description="Disordered" evidence="3">
    <location>
        <begin position="473"/>
        <end position="494"/>
    </location>
</feature>
<feature type="compositionally biased region" description="Low complexity" evidence="3">
    <location>
        <begin position="474"/>
        <end position="494"/>
    </location>
</feature>
<feature type="active site" description="Proton donor" evidence="1">
    <location>
        <position position="226"/>
    </location>
</feature>
<feature type="active site" description="Nucleophile" evidence="1">
    <location>
        <position position="381"/>
    </location>
</feature>
<dbReference type="EC" id="3.2.1.4"/>
<dbReference type="EMBL" id="X69390">
    <property type="protein sequence ID" value="CAA49187.1"/>
    <property type="molecule type" value="Genomic_DNA"/>
</dbReference>
<dbReference type="EMBL" id="CP000568">
    <property type="protein sequence ID" value="ABN54070.1"/>
    <property type="molecule type" value="Genomic_DNA"/>
</dbReference>
<dbReference type="PIR" id="A40589">
    <property type="entry name" value="A40589"/>
</dbReference>
<dbReference type="RefSeq" id="WP_003514548.1">
    <property type="nucleotide sequence ID" value="NC_009012.1"/>
</dbReference>
<dbReference type="SMR" id="Q05332"/>
<dbReference type="IntAct" id="Q05332">
    <property type="interactions" value="1"/>
</dbReference>
<dbReference type="STRING" id="203119.Cthe_2872"/>
<dbReference type="CAZy" id="GH5">
    <property type="family name" value="Glycoside Hydrolase Family 5"/>
</dbReference>
<dbReference type="GeneID" id="35804359"/>
<dbReference type="KEGG" id="cth:Cthe_2872"/>
<dbReference type="eggNOG" id="COG2730">
    <property type="taxonomic scope" value="Bacteria"/>
</dbReference>
<dbReference type="HOGENOM" id="CLU_020735_2_0_9"/>
<dbReference type="OrthoDB" id="9800475at2"/>
<dbReference type="BioCyc" id="MetaCyc:MONOMER-16420"/>
<dbReference type="Proteomes" id="UP000002145">
    <property type="component" value="Chromosome"/>
</dbReference>
<dbReference type="GO" id="GO:0043263">
    <property type="term" value="C:cellulosome"/>
    <property type="evidence" value="ECO:0000314"/>
    <property type="project" value="MENGO"/>
</dbReference>
<dbReference type="GO" id="GO:0008810">
    <property type="term" value="F:cellulase activity"/>
    <property type="evidence" value="ECO:0000314"/>
    <property type="project" value="MENGO"/>
</dbReference>
<dbReference type="GO" id="GO:0030245">
    <property type="term" value="P:cellulose catabolic process"/>
    <property type="evidence" value="ECO:0007669"/>
    <property type="project" value="UniProtKB-KW"/>
</dbReference>
<dbReference type="CDD" id="cd14256">
    <property type="entry name" value="Dockerin_I"/>
    <property type="match status" value="1"/>
</dbReference>
<dbReference type="FunFam" id="1.10.1330.10:FF:000001">
    <property type="entry name" value="Endoglucanase D"/>
    <property type="match status" value="1"/>
</dbReference>
<dbReference type="FunFam" id="3.20.20.80:FF:000308">
    <property type="entry name" value="Glycoside hydrolase"/>
    <property type="match status" value="1"/>
</dbReference>
<dbReference type="Gene3D" id="1.10.1330.10">
    <property type="entry name" value="Dockerin domain"/>
    <property type="match status" value="1"/>
</dbReference>
<dbReference type="Gene3D" id="3.20.20.80">
    <property type="entry name" value="Glycosidases"/>
    <property type="match status" value="1"/>
</dbReference>
<dbReference type="InterPro" id="IPR002105">
    <property type="entry name" value="Dockerin_1_rpt"/>
</dbReference>
<dbReference type="InterPro" id="IPR016134">
    <property type="entry name" value="Dockerin_dom"/>
</dbReference>
<dbReference type="InterPro" id="IPR036439">
    <property type="entry name" value="Dockerin_dom_sf"/>
</dbReference>
<dbReference type="InterPro" id="IPR018247">
    <property type="entry name" value="EF_Hand_1_Ca_BS"/>
</dbReference>
<dbReference type="InterPro" id="IPR001547">
    <property type="entry name" value="Glyco_hydro_5"/>
</dbReference>
<dbReference type="InterPro" id="IPR018087">
    <property type="entry name" value="Glyco_hydro_5_CS"/>
</dbReference>
<dbReference type="InterPro" id="IPR017853">
    <property type="entry name" value="Glycoside_hydrolase_SF"/>
</dbReference>
<dbReference type="PANTHER" id="PTHR35923:SF2">
    <property type="entry name" value="ENDOGLUCANASE"/>
    <property type="match status" value="1"/>
</dbReference>
<dbReference type="PANTHER" id="PTHR35923">
    <property type="entry name" value="MAJOR EXTRACELLULAR ENDOGLUCANASE"/>
    <property type="match status" value="1"/>
</dbReference>
<dbReference type="Pfam" id="PF00150">
    <property type="entry name" value="Cellulase"/>
    <property type="match status" value="1"/>
</dbReference>
<dbReference type="Pfam" id="PF00404">
    <property type="entry name" value="Dockerin_1"/>
    <property type="match status" value="1"/>
</dbReference>
<dbReference type="SUPFAM" id="SSF51445">
    <property type="entry name" value="(Trans)glycosidases"/>
    <property type="match status" value="1"/>
</dbReference>
<dbReference type="SUPFAM" id="SSF63446">
    <property type="entry name" value="Type I dockerin domain"/>
    <property type="match status" value="1"/>
</dbReference>
<dbReference type="PROSITE" id="PS00448">
    <property type="entry name" value="CLOS_CELLULOSOME_RPT"/>
    <property type="match status" value="2"/>
</dbReference>
<dbReference type="PROSITE" id="PS51766">
    <property type="entry name" value="DOCKERIN"/>
    <property type="match status" value="1"/>
</dbReference>
<dbReference type="PROSITE" id="PS00018">
    <property type="entry name" value="EF_HAND_1"/>
    <property type="match status" value="2"/>
</dbReference>
<dbReference type="PROSITE" id="PS00659">
    <property type="entry name" value="GLYCOSYL_HYDROL_F5"/>
    <property type="match status" value="1"/>
</dbReference>
<evidence type="ECO:0000250" key="1"/>
<evidence type="ECO:0000255" key="2">
    <source>
        <dbReference type="PROSITE-ProRule" id="PRU01102"/>
    </source>
</evidence>
<evidence type="ECO:0000256" key="3">
    <source>
        <dbReference type="SAM" id="MobiDB-lite"/>
    </source>
</evidence>
<evidence type="ECO:0000305" key="4"/>
<gene>
    <name type="primary">celG</name>
    <name type="ordered locus">Cthe_2872</name>
</gene>
<organism>
    <name type="scientific">Acetivibrio thermocellus (strain ATCC 27405 / DSM 1237 / JCM 9322 / NBRC 103400 / NCIMB 10682 / NRRL B-4536 / VPI 7372)</name>
    <name type="common">Clostridium thermocellum</name>
    <dbReference type="NCBI Taxonomy" id="203119"/>
    <lineage>
        <taxon>Bacteria</taxon>
        <taxon>Bacillati</taxon>
        <taxon>Bacillota</taxon>
        <taxon>Clostridia</taxon>
        <taxon>Eubacteriales</taxon>
        <taxon>Oscillospiraceae</taxon>
        <taxon>Acetivibrio</taxon>
    </lineage>
</organism>
<keyword id="KW-0119">Carbohydrate metabolism</keyword>
<keyword id="KW-0136">Cellulose degradation</keyword>
<keyword id="KW-0326">Glycosidase</keyword>
<keyword id="KW-0378">Hydrolase</keyword>
<keyword id="KW-0624">Polysaccharide degradation</keyword>
<keyword id="KW-1185">Reference proteome</keyword>
<keyword id="KW-0732">Signal</keyword>
<accession>Q05332</accession>
<accession>A3DJE1</accession>
<protein>
    <recommendedName>
        <fullName>Endoglucanase G</fullName>
        <ecNumber>3.2.1.4</ecNumber>
    </recommendedName>
    <alternativeName>
        <fullName>Cellulase G</fullName>
    </alternativeName>
    <alternativeName>
        <fullName>Endo-1,4-beta-glucanase G</fullName>
        <shortName>EgG</shortName>
    </alternativeName>
</protein>
<comment type="function">
    <text>This enzyme catalyzes the endohydrolysis of 1,4-beta-glucosidic linkages in cellulose, lichenin and cereal beta-D-glucans.</text>
</comment>
<comment type="catalytic activity">
    <reaction>
        <text>Endohydrolysis of (1-&gt;4)-beta-D-glucosidic linkages in cellulose, lichenin and cereal beta-D-glucans.</text>
        <dbReference type="EC" id="3.2.1.4"/>
    </reaction>
</comment>
<comment type="similarity">
    <text evidence="4">Belongs to the glycosyl hydrolase 5 (cellulase A) family.</text>
</comment>
<proteinExistence type="inferred from homology"/>
<reference key="1">
    <citation type="journal article" date="1993" name="J. Bacteriol.">
        <title>Nucleotide sequence of the celG gene of Clostridium thermocellum and characterization of its product, endoglucanase CelG.</title>
        <authorList>
            <person name="Lemaire M."/>
            <person name="Beguin P."/>
        </authorList>
    </citation>
    <scope>NUCLEOTIDE SEQUENCE [GENOMIC DNA]</scope>
</reference>
<reference key="2">
    <citation type="submission" date="2007-02" db="EMBL/GenBank/DDBJ databases">
        <title>Complete sequence of Clostridium thermocellum ATCC 27405.</title>
        <authorList>
            <consortium name="US DOE Joint Genome Institute"/>
            <person name="Copeland A."/>
            <person name="Lucas S."/>
            <person name="Lapidus A."/>
            <person name="Barry K."/>
            <person name="Detter J.C."/>
            <person name="Glavina del Rio T."/>
            <person name="Hammon N."/>
            <person name="Israni S."/>
            <person name="Dalin E."/>
            <person name="Tice H."/>
            <person name="Pitluck S."/>
            <person name="Chertkov O."/>
            <person name="Brettin T."/>
            <person name="Bruce D."/>
            <person name="Han C."/>
            <person name="Tapia R."/>
            <person name="Gilna P."/>
            <person name="Schmutz J."/>
            <person name="Larimer F."/>
            <person name="Land M."/>
            <person name="Hauser L."/>
            <person name="Kyrpides N."/>
            <person name="Mikhailova N."/>
            <person name="Wu J.H.D."/>
            <person name="Newcomb M."/>
            <person name="Richardson P."/>
        </authorList>
    </citation>
    <scope>NUCLEOTIDE SEQUENCE [LARGE SCALE GENOMIC DNA]</scope>
    <source>
        <strain>ATCC 27405 / DSM 1237 / JCM 9322 / NBRC 103400 / NCIMB 10682 / NRRL B-4536 / VPI 7372</strain>
    </source>
</reference>
<sequence>MKKAKAIFSLVVALMVLAIFCFAQNTGSTATTAAAAVDSNNDDWLHCKGNKIYDMYGNEVWLTGANWFGFNCSENCFHGAWYDVKTILTSIADRGINLLRIPISTELLYSWMIGKPNPVSSVTASNNPPYHVVNPDFYDPETDDVKNSMEIFDIIMGYCKELGIKVMIDIHSPDANNSGHNYELWYGKETSTCGVVTTKMWIDTLVWLADKYKNDDTIIAFDLKNEPHGKRGYTAEVPKLLAKWDNSTDENNWKYAAETCAKAILEVNPKVLIVIEGVEQYPKTEKGYTYDTPDIWGATGDASPWYSAWWGGNLRGVKDYPIDLGPLNSQIVYSPHDYGPSVYAQPWFEKDFTMQTLLDDYWYDTWAYIHDQGIAPILIGEWGGHMDGGKNQKWMTLLRDYIVQNRIHHTFWCINPNSGDTGGLLGNDWSTWDEAKYALLKPALWQTKDGKFIGLDHKIPLGSKGISLGEYYGTPQASDPPATPTATPTKPAASSTPSFIYGDINSDGNVNSTDLGILKRIIVKNPPASANMDAADVNADGKVNSTDYTVLKRYLLRSIDKLPHTT</sequence>
<name>GUNG_ACET2</name>